<comment type="function">
    <text evidence="1">May play a role in DNA repair. It seems to be involved in an RecBC-independent recombinational process of DNA repair. It may act with RecF and RecO.</text>
</comment>
<comment type="similarity">
    <text evidence="1">Belongs to the RecR family.</text>
</comment>
<feature type="chain" id="PRO_1000001519" description="Recombination protein RecR">
    <location>
        <begin position="1"/>
        <end position="190"/>
    </location>
</feature>
<feature type="domain" description="Toprim" evidence="1">
    <location>
        <begin position="81"/>
        <end position="167"/>
    </location>
</feature>
<feature type="zinc finger region" description="C4-type" evidence="1">
    <location>
        <begin position="58"/>
        <end position="73"/>
    </location>
</feature>
<keyword id="KW-0227">DNA damage</keyword>
<keyword id="KW-0233">DNA recombination</keyword>
<keyword id="KW-0234">DNA repair</keyword>
<keyword id="KW-0479">Metal-binding</keyword>
<keyword id="KW-0862">Zinc</keyword>
<keyword id="KW-0863">Zinc-finger</keyword>
<name>RECR_CAMJJ</name>
<gene>
    <name evidence="1" type="primary">recR</name>
    <name type="ordered locus">CJJ81176_1279</name>
</gene>
<evidence type="ECO:0000255" key="1">
    <source>
        <dbReference type="HAMAP-Rule" id="MF_00017"/>
    </source>
</evidence>
<dbReference type="EMBL" id="CP000538">
    <property type="protein sequence ID" value="EAQ72944.1"/>
    <property type="molecule type" value="Genomic_DNA"/>
</dbReference>
<dbReference type="RefSeq" id="WP_002853446.1">
    <property type="nucleotide sequence ID" value="NC_008787.1"/>
</dbReference>
<dbReference type="SMR" id="A1W0P8"/>
<dbReference type="KEGG" id="cjj:CJJ81176_1279"/>
<dbReference type="eggNOG" id="COG0353">
    <property type="taxonomic scope" value="Bacteria"/>
</dbReference>
<dbReference type="HOGENOM" id="CLU_060739_1_1_7"/>
<dbReference type="Proteomes" id="UP000000646">
    <property type="component" value="Chromosome"/>
</dbReference>
<dbReference type="GO" id="GO:0003677">
    <property type="term" value="F:DNA binding"/>
    <property type="evidence" value="ECO:0007669"/>
    <property type="project" value="UniProtKB-UniRule"/>
</dbReference>
<dbReference type="GO" id="GO:0008270">
    <property type="term" value="F:zinc ion binding"/>
    <property type="evidence" value="ECO:0007669"/>
    <property type="project" value="UniProtKB-KW"/>
</dbReference>
<dbReference type="GO" id="GO:0006310">
    <property type="term" value="P:DNA recombination"/>
    <property type="evidence" value="ECO:0007669"/>
    <property type="project" value="UniProtKB-UniRule"/>
</dbReference>
<dbReference type="GO" id="GO:0006281">
    <property type="term" value="P:DNA repair"/>
    <property type="evidence" value="ECO:0007669"/>
    <property type="project" value="UniProtKB-UniRule"/>
</dbReference>
<dbReference type="CDD" id="cd01025">
    <property type="entry name" value="TOPRIM_recR"/>
    <property type="match status" value="1"/>
</dbReference>
<dbReference type="Gene3D" id="3.30.60.80">
    <property type="match status" value="1"/>
</dbReference>
<dbReference type="Gene3D" id="3.40.1360.10">
    <property type="match status" value="1"/>
</dbReference>
<dbReference type="Gene3D" id="1.10.8.420">
    <property type="entry name" value="RecR Domain 1"/>
    <property type="match status" value="1"/>
</dbReference>
<dbReference type="HAMAP" id="MF_00017">
    <property type="entry name" value="RecR"/>
    <property type="match status" value="1"/>
</dbReference>
<dbReference type="InterPro" id="IPR000093">
    <property type="entry name" value="DNA_Rcmb_RecR"/>
</dbReference>
<dbReference type="InterPro" id="IPR023627">
    <property type="entry name" value="Rcmb_RecR"/>
</dbReference>
<dbReference type="InterPro" id="IPR015967">
    <property type="entry name" value="Rcmb_RecR_Znf"/>
</dbReference>
<dbReference type="InterPro" id="IPR006171">
    <property type="entry name" value="TOPRIM_dom"/>
</dbReference>
<dbReference type="InterPro" id="IPR034137">
    <property type="entry name" value="TOPRIM_RecR"/>
</dbReference>
<dbReference type="NCBIfam" id="TIGR00615">
    <property type="entry name" value="recR"/>
    <property type="match status" value="1"/>
</dbReference>
<dbReference type="PANTHER" id="PTHR30446">
    <property type="entry name" value="RECOMBINATION PROTEIN RECR"/>
    <property type="match status" value="1"/>
</dbReference>
<dbReference type="PANTHER" id="PTHR30446:SF0">
    <property type="entry name" value="RECOMBINATION PROTEIN RECR"/>
    <property type="match status" value="1"/>
</dbReference>
<dbReference type="Pfam" id="PF21176">
    <property type="entry name" value="RecR_HhH"/>
    <property type="match status" value="1"/>
</dbReference>
<dbReference type="Pfam" id="PF02132">
    <property type="entry name" value="RecR_ZnF"/>
    <property type="match status" value="1"/>
</dbReference>
<dbReference type="Pfam" id="PF13662">
    <property type="entry name" value="Toprim_4"/>
    <property type="match status" value="1"/>
</dbReference>
<dbReference type="SUPFAM" id="SSF111304">
    <property type="entry name" value="Recombination protein RecR"/>
    <property type="match status" value="1"/>
</dbReference>
<dbReference type="PROSITE" id="PS01300">
    <property type="entry name" value="RECR"/>
    <property type="match status" value="1"/>
</dbReference>
<dbReference type="PROSITE" id="PS50880">
    <property type="entry name" value="TOPRIM"/>
    <property type="match status" value="1"/>
</dbReference>
<organism>
    <name type="scientific">Campylobacter jejuni subsp. jejuni serotype O:23/36 (strain 81-176)</name>
    <dbReference type="NCBI Taxonomy" id="354242"/>
    <lineage>
        <taxon>Bacteria</taxon>
        <taxon>Pseudomonadati</taxon>
        <taxon>Campylobacterota</taxon>
        <taxon>Epsilonproteobacteria</taxon>
        <taxon>Campylobacterales</taxon>
        <taxon>Campylobacteraceae</taxon>
        <taxon>Campylobacter</taxon>
    </lineage>
</organism>
<accession>A1W0P8</accession>
<proteinExistence type="inferred from homology"/>
<protein>
    <recommendedName>
        <fullName evidence="1">Recombination protein RecR</fullName>
    </recommendedName>
</protein>
<sequence length="190" mass="21511">MVKGLEKFNELVESFANLPTIGKKTAIRLAYHLCINNQIDGMKLAHNIENAIRFIKPCEQCGALSENELCEICSDEERNKNILCIVESPKDILTLEESQSYNGLYFVLDELNEEKLEKLKQIILKLNISELIFALTHSINSDATIFFIEDKFKGLNLTFSKIAQGIPSGVNLENVDLISLNKAMNFRTKI</sequence>
<reference key="1">
    <citation type="submission" date="2006-12" db="EMBL/GenBank/DDBJ databases">
        <authorList>
            <person name="Fouts D.E."/>
            <person name="Nelson K.E."/>
            <person name="Sebastian Y."/>
        </authorList>
    </citation>
    <scope>NUCLEOTIDE SEQUENCE [LARGE SCALE GENOMIC DNA]</scope>
    <source>
        <strain>81-176</strain>
    </source>
</reference>